<reference key="1">
    <citation type="submission" date="2002-02" db="EMBL/GenBank/DDBJ databases">
        <title>Cloning of a taxa-4(20),11(12)-dien-5alpha-ol-O-acetyltransferase cDNA from Taxus chinensis and functional expression in Escherichia coli.</title>
        <authorList>
            <person name="Wang W."/>
            <person name="Song S."/>
            <person name="Cheng K."/>
        </authorList>
    </citation>
    <scope>NUCLEOTIDE SEQUENCE [MRNA]</scope>
</reference>
<keyword id="KW-0012">Acyltransferase</keyword>
<keyword id="KW-0876">Taxol biosynthesis</keyword>
<keyword id="KW-0808">Transferase</keyword>
<accession>Q8S9G6</accession>
<comment type="catalytic activity">
    <reaction>
        <text>taxa-4(20),11-dien-5alpha-ol + acetyl-CoA = taxa-4(20),11-dien-5alpha-yl acetate + CoA</text>
        <dbReference type="Rhea" id="RHEA:22028"/>
        <dbReference type="ChEBI" id="CHEBI:30038"/>
        <dbReference type="ChEBI" id="CHEBI:30042"/>
        <dbReference type="ChEBI" id="CHEBI:57287"/>
        <dbReference type="ChEBI" id="CHEBI:57288"/>
        <dbReference type="EC" id="2.3.1.162"/>
    </reaction>
</comment>
<comment type="pathway">
    <text>Alkaloid biosynthesis; taxol biosynthesis; 10-deacetyl-2-debenzoylbaccatin III from taxa-4(20),11-dien-5alpha-ol: step 1/3.</text>
</comment>
<comment type="similarity">
    <text evidence="2">Belongs to the plant acyltransferase family.</text>
</comment>
<evidence type="ECO:0000255" key="1"/>
<evidence type="ECO:0000305" key="2"/>
<sequence>MEKTDLHVNLNEKVMVGPSLPLPKTTLQLSSIDNLPGVRGSIFNALLIYNASPSPTMVSADPAKLIREALAKILVYYPPFAGRLRETENGDLEVECTGEGAMFLEAMADNELSVLGDFDDSNPSFQQLLFSLPLDTNFKDLPLLVVQVTRFTCGGFVVGVSFHHGVCDGRGAAQFLKGLAEMARGEVKLSLEPIWNRELVKLDDPKYLQFFHFEFLRAPSIVEKIVQTYFIIDFETINYIKQSVMEECKEFCSSFEVASAMTWIARTRAFQIPESEYVKILFGMDMRNSFNPPLPSGYYGNSIGTACAVDNVQDLLSGSLLRAIMIIKKSKVSLNDNFKSRAVVKPSELDVNMNHENVVAFADWSRLGFDEVDFGWGNAVSVSPVQQQCELAMQNYFLFLKPSKNKPDGIKILMFLPLSKMKSFKIEMEAMMKKYVAKV</sequence>
<dbReference type="EC" id="2.3.1.162"/>
<dbReference type="EMBL" id="AY078285">
    <property type="protein sequence ID" value="AAL78754.1"/>
    <property type="molecule type" value="mRNA"/>
</dbReference>
<dbReference type="SMR" id="Q8S9G6"/>
<dbReference type="BioCyc" id="MetaCyc:MONOMER-13400"/>
<dbReference type="UniPathway" id="UPA00842">
    <property type="reaction ID" value="UER00808"/>
</dbReference>
<dbReference type="GO" id="GO:0050638">
    <property type="term" value="F:taxadien-5-alpha-ol O-acetyltransferase activity"/>
    <property type="evidence" value="ECO:0007669"/>
    <property type="project" value="UniProtKB-EC"/>
</dbReference>
<dbReference type="GO" id="GO:0042617">
    <property type="term" value="P:paclitaxel biosynthetic process"/>
    <property type="evidence" value="ECO:0007669"/>
    <property type="project" value="UniProtKB-UniPathway"/>
</dbReference>
<dbReference type="Gene3D" id="3.30.559.10">
    <property type="entry name" value="Chloramphenicol acetyltransferase-like domain"/>
    <property type="match status" value="2"/>
</dbReference>
<dbReference type="InterPro" id="IPR023213">
    <property type="entry name" value="CAT-like_dom_sf"/>
</dbReference>
<dbReference type="InterPro" id="IPR050898">
    <property type="entry name" value="Plant_acyltransferase"/>
</dbReference>
<dbReference type="PANTHER" id="PTHR31147">
    <property type="entry name" value="ACYL TRANSFERASE 4"/>
    <property type="match status" value="1"/>
</dbReference>
<dbReference type="PANTHER" id="PTHR31147:SF1">
    <property type="entry name" value="ACYL TRANSFERASE 4"/>
    <property type="match status" value="1"/>
</dbReference>
<dbReference type="Pfam" id="PF02458">
    <property type="entry name" value="Transferase"/>
    <property type="match status" value="1"/>
</dbReference>
<organism>
    <name type="scientific">Taxus chinensis</name>
    <name type="common">Chinese yew</name>
    <name type="synonym">Taxus wallichiana var. chinensis</name>
    <dbReference type="NCBI Taxonomy" id="29808"/>
    <lineage>
        <taxon>Eukaryota</taxon>
        <taxon>Viridiplantae</taxon>
        <taxon>Streptophyta</taxon>
        <taxon>Embryophyta</taxon>
        <taxon>Tracheophyta</taxon>
        <taxon>Spermatophyta</taxon>
        <taxon>Pinopsida</taxon>
        <taxon>Pinidae</taxon>
        <taxon>Conifers II</taxon>
        <taxon>Cupressales</taxon>
        <taxon>Taxaceae</taxon>
        <taxon>Taxus</taxon>
    </lineage>
</organism>
<protein>
    <recommendedName>
        <fullName>Taxadien-5-alpha-ol O-acetyltransferase</fullName>
        <ecNumber>2.3.1.162</ecNumber>
    </recommendedName>
    <alternativeName>
        <fullName>Taxa-4(20),11(12)-dien-5alpha-ol-O-acetyltransferase</fullName>
        <shortName>Taxadienol acetyltransferase</shortName>
    </alternativeName>
</protein>
<feature type="chain" id="PRO_0000147357" description="Taxadien-5-alpha-ol O-acetyltransferase">
    <location>
        <begin position="1"/>
        <end position="439"/>
    </location>
</feature>
<feature type="active site" description="Proton acceptor" evidence="1">
    <location>
        <position position="164"/>
    </location>
</feature>
<feature type="active site" description="Proton acceptor" evidence="1">
    <location>
        <position position="373"/>
    </location>
</feature>
<proteinExistence type="evidence at transcript level"/>
<name>T5AT_TAXCH</name>